<protein>
    <recommendedName>
        <fullName evidence="1">Acyl carrier protein</fullName>
        <shortName evidence="1">ACP</shortName>
    </recommendedName>
</protein>
<evidence type="ECO:0000255" key="1">
    <source>
        <dbReference type="HAMAP-Rule" id="MF_01217"/>
    </source>
</evidence>
<evidence type="ECO:0000255" key="2">
    <source>
        <dbReference type="PROSITE-ProRule" id="PRU00258"/>
    </source>
</evidence>
<dbReference type="EMBL" id="CP000868">
    <property type="protein sequence ID" value="ABX15865.1"/>
    <property type="molecule type" value="Genomic_DNA"/>
</dbReference>
<dbReference type="EMBL" id="AP009385">
    <property type="protein sequence ID" value="BAG43005.1"/>
    <property type="molecule type" value="Genomic_DNA"/>
</dbReference>
<dbReference type="RefSeq" id="WP_004197638.1">
    <property type="nucleotide sequence ID" value="NC_010804.1"/>
</dbReference>
<dbReference type="SMR" id="A9ADE8"/>
<dbReference type="STRING" id="395019.BMULJ_01061"/>
<dbReference type="GeneID" id="98102461"/>
<dbReference type="KEGG" id="bmj:BMULJ_01061"/>
<dbReference type="KEGG" id="bmu:Bmul_2180"/>
<dbReference type="eggNOG" id="COG0236">
    <property type="taxonomic scope" value="Bacteria"/>
</dbReference>
<dbReference type="HOGENOM" id="CLU_108696_5_1_4"/>
<dbReference type="UniPathway" id="UPA00094"/>
<dbReference type="Proteomes" id="UP000008815">
    <property type="component" value="Chromosome 1"/>
</dbReference>
<dbReference type="GO" id="GO:0005829">
    <property type="term" value="C:cytosol"/>
    <property type="evidence" value="ECO:0007669"/>
    <property type="project" value="TreeGrafter"/>
</dbReference>
<dbReference type="GO" id="GO:0016020">
    <property type="term" value="C:membrane"/>
    <property type="evidence" value="ECO:0007669"/>
    <property type="project" value="GOC"/>
</dbReference>
<dbReference type="GO" id="GO:0000035">
    <property type="term" value="F:acyl binding"/>
    <property type="evidence" value="ECO:0007669"/>
    <property type="project" value="TreeGrafter"/>
</dbReference>
<dbReference type="GO" id="GO:0000036">
    <property type="term" value="F:acyl carrier activity"/>
    <property type="evidence" value="ECO:0007669"/>
    <property type="project" value="UniProtKB-UniRule"/>
</dbReference>
<dbReference type="GO" id="GO:0009245">
    <property type="term" value="P:lipid A biosynthetic process"/>
    <property type="evidence" value="ECO:0007669"/>
    <property type="project" value="TreeGrafter"/>
</dbReference>
<dbReference type="FunFam" id="1.10.1200.10:FF:000001">
    <property type="entry name" value="Acyl carrier protein"/>
    <property type="match status" value="1"/>
</dbReference>
<dbReference type="Gene3D" id="1.10.1200.10">
    <property type="entry name" value="ACP-like"/>
    <property type="match status" value="1"/>
</dbReference>
<dbReference type="HAMAP" id="MF_01217">
    <property type="entry name" value="Acyl_carrier"/>
    <property type="match status" value="1"/>
</dbReference>
<dbReference type="InterPro" id="IPR003231">
    <property type="entry name" value="ACP"/>
</dbReference>
<dbReference type="InterPro" id="IPR036736">
    <property type="entry name" value="ACP-like_sf"/>
</dbReference>
<dbReference type="InterPro" id="IPR009081">
    <property type="entry name" value="PP-bd_ACP"/>
</dbReference>
<dbReference type="InterPro" id="IPR006162">
    <property type="entry name" value="Ppantetheine_attach_site"/>
</dbReference>
<dbReference type="NCBIfam" id="TIGR00517">
    <property type="entry name" value="acyl_carrier"/>
    <property type="match status" value="1"/>
</dbReference>
<dbReference type="NCBIfam" id="NF002148">
    <property type="entry name" value="PRK00982.1-2"/>
    <property type="match status" value="1"/>
</dbReference>
<dbReference type="NCBIfam" id="NF002149">
    <property type="entry name" value="PRK00982.1-3"/>
    <property type="match status" value="1"/>
</dbReference>
<dbReference type="NCBIfam" id="NF002150">
    <property type="entry name" value="PRK00982.1-4"/>
    <property type="match status" value="1"/>
</dbReference>
<dbReference type="NCBIfam" id="NF002151">
    <property type="entry name" value="PRK00982.1-5"/>
    <property type="match status" value="1"/>
</dbReference>
<dbReference type="PANTHER" id="PTHR20863">
    <property type="entry name" value="ACYL CARRIER PROTEIN"/>
    <property type="match status" value="1"/>
</dbReference>
<dbReference type="PANTHER" id="PTHR20863:SF76">
    <property type="entry name" value="CARRIER DOMAIN-CONTAINING PROTEIN"/>
    <property type="match status" value="1"/>
</dbReference>
<dbReference type="Pfam" id="PF00550">
    <property type="entry name" value="PP-binding"/>
    <property type="match status" value="1"/>
</dbReference>
<dbReference type="SUPFAM" id="SSF47336">
    <property type="entry name" value="ACP-like"/>
    <property type="match status" value="1"/>
</dbReference>
<dbReference type="PROSITE" id="PS50075">
    <property type="entry name" value="CARRIER"/>
    <property type="match status" value="1"/>
</dbReference>
<dbReference type="PROSITE" id="PS00012">
    <property type="entry name" value="PHOSPHOPANTETHEINE"/>
    <property type="match status" value="1"/>
</dbReference>
<gene>
    <name evidence="1" type="primary">acpP</name>
    <name type="ordered locus">Bmul_2180</name>
    <name type="ordered locus">BMULJ_01061</name>
</gene>
<sequence length="79" mass="8712">MDNIEQRVKKIVAEQLGVAEAEIKNEASFVNDLGADSLDTVELVMALEDEFGMEIPDEEAEKITTVQQAIDYARANVKA</sequence>
<name>ACP_BURM1</name>
<keyword id="KW-0963">Cytoplasm</keyword>
<keyword id="KW-0275">Fatty acid biosynthesis</keyword>
<keyword id="KW-0276">Fatty acid metabolism</keyword>
<keyword id="KW-0444">Lipid biosynthesis</keyword>
<keyword id="KW-0443">Lipid metabolism</keyword>
<keyword id="KW-0596">Phosphopantetheine</keyword>
<keyword id="KW-0597">Phosphoprotein</keyword>
<keyword id="KW-1185">Reference proteome</keyword>
<reference key="1">
    <citation type="submission" date="2007-10" db="EMBL/GenBank/DDBJ databases">
        <title>Complete sequence of chromosome 1 of Burkholderia multivorans ATCC 17616.</title>
        <authorList>
            <person name="Copeland A."/>
            <person name="Lucas S."/>
            <person name="Lapidus A."/>
            <person name="Barry K."/>
            <person name="Glavina del Rio T."/>
            <person name="Dalin E."/>
            <person name="Tice H."/>
            <person name="Pitluck S."/>
            <person name="Chain P."/>
            <person name="Malfatti S."/>
            <person name="Shin M."/>
            <person name="Vergez L."/>
            <person name="Schmutz J."/>
            <person name="Larimer F."/>
            <person name="Land M."/>
            <person name="Hauser L."/>
            <person name="Kyrpides N."/>
            <person name="Kim E."/>
            <person name="Tiedje J."/>
            <person name="Richardson P."/>
        </authorList>
    </citation>
    <scope>NUCLEOTIDE SEQUENCE [LARGE SCALE GENOMIC DNA]</scope>
    <source>
        <strain>ATCC 17616 / 249</strain>
    </source>
</reference>
<reference key="2">
    <citation type="submission" date="2007-04" db="EMBL/GenBank/DDBJ databases">
        <title>Complete genome sequence of Burkholderia multivorans ATCC 17616.</title>
        <authorList>
            <person name="Ohtsubo Y."/>
            <person name="Yamashita A."/>
            <person name="Kurokawa K."/>
            <person name="Takami H."/>
            <person name="Yuhara S."/>
            <person name="Nishiyama E."/>
            <person name="Endo R."/>
            <person name="Miyazaki R."/>
            <person name="Ono A."/>
            <person name="Yano K."/>
            <person name="Ito M."/>
            <person name="Sota M."/>
            <person name="Yuji N."/>
            <person name="Hattori M."/>
            <person name="Tsuda M."/>
        </authorList>
    </citation>
    <scope>NUCLEOTIDE SEQUENCE [LARGE SCALE GENOMIC DNA]</scope>
    <source>
        <strain>ATCC 17616 / 249</strain>
    </source>
</reference>
<proteinExistence type="inferred from homology"/>
<feature type="chain" id="PRO_1000139007" description="Acyl carrier protein">
    <location>
        <begin position="1"/>
        <end position="79"/>
    </location>
</feature>
<feature type="domain" description="Carrier" evidence="2">
    <location>
        <begin position="2"/>
        <end position="77"/>
    </location>
</feature>
<feature type="modified residue" description="O-(pantetheine 4'-phosphoryl)serine" evidence="2">
    <location>
        <position position="37"/>
    </location>
</feature>
<accession>A9ADE8</accession>
<comment type="function">
    <text evidence="1">Carrier of the growing fatty acid chain in fatty acid biosynthesis.</text>
</comment>
<comment type="pathway">
    <text evidence="1">Lipid metabolism; fatty acid biosynthesis.</text>
</comment>
<comment type="subcellular location">
    <subcellularLocation>
        <location evidence="1">Cytoplasm</location>
    </subcellularLocation>
</comment>
<comment type="PTM">
    <text evidence="1">4'-phosphopantetheine is transferred from CoA to a specific serine of apo-ACP by AcpS. This modification is essential for activity because fatty acids are bound in thioester linkage to the sulfhydryl of the prosthetic group.</text>
</comment>
<comment type="similarity">
    <text evidence="1">Belongs to the acyl carrier protein (ACP) family.</text>
</comment>
<organism>
    <name type="scientific">Burkholderia multivorans (strain ATCC 17616 / 249)</name>
    <dbReference type="NCBI Taxonomy" id="395019"/>
    <lineage>
        <taxon>Bacteria</taxon>
        <taxon>Pseudomonadati</taxon>
        <taxon>Pseudomonadota</taxon>
        <taxon>Betaproteobacteria</taxon>
        <taxon>Burkholderiales</taxon>
        <taxon>Burkholderiaceae</taxon>
        <taxon>Burkholderia</taxon>
        <taxon>Burkholderia cepacia complex</taxon>
    </lineage>
</organism>